<organism>
    <name type="scientific">Escherichia coli O157:H7</name>
    <dbReference type="NCBI Taxonomy" id="83334"/>
    <lineage>
        <taxon>Bacteria</taxon>
        <taxon>Pseudomonadati</taxon>
        <taxon>Pseudomonadota</taxon>
        <taxon>Gammaproteobacteria</taxon>
        <taxon>Enterobacterales</taxon>
        <taxon>Enterobacteriaceae</taxon>
        <taxon>Escherichia</taxon>
    </lineage>
</organism>
<name>NTRB_ECO57</name>
<accession>P0AFB6</accession>
<accession>P06712</accession>
<sequence length="349" mass="38556">MATGTQPDAGQILNSLINSILLIDDNLAIHYANPAAQQLLAQSSRKLFGTPLPELLSYFSLNIELMQESLEAGQGFTDNEVTLVIDGRSHILSVTAQRMPDGMILLEMAPMDNQRRLSQEQLQHAQQVAARDLVRGLAHEIKNPLGGLRGAAQLLSKALPDPSLLEYTKVIIEQADRLRNLVDRLLGPQLPGTRVTESIHKVAERVVTLVSMELPDNVRLIRDYDPSLPELAHDPDQIEQVLLNIVRNALQALGPEGGEIILRTRTAFQLTLHGERYRLAARIDVEDNGPGIPPHLQDTLFYPMVSGREGGTGLGLSIARNLIDQHSGKIEFTSWPGHTEFSVYLPIRK</sequence>
<keyword id="KW-0067">ATP-binding</keyword>
<keyword id="KW-0963">Cytoplasm</keyword>
<keyword id="KW-0378">Hydrolase</keyword>
<keyword id="KW-0418">Kinase</keyword>
<keyword id="KW-0535">Nitrogen fixation</keyword>
<keyword id="KW-0547">Nucleotide-binding</keyword>
<keyword id="KW-0597">Phosphoprotein</keyword>
<keyword id="KW-1185">Reference proteome</keyword>
<keyword id="KW-0808">Transferase</keyword>
<keyword id="KW-0902">Two-component regulatory system</keyword>
<comment type="function">
    <text evidence="2">Member of the two-component regulatory system NtrB/NtrC, which controls expression of the nitrogen-regulated (ntr) genes in response to nitrogen limitation. Under conditions of nitrogen limitation, NtrB autophosphorylates and transfers the phosphoryl group to NtrC. In the presence of nitrogen, acts as a phosphatase that dephosphorylates and inactivates NtrC.</text>
</comment>
<comment type="catalytic activity">
    <reaction evidence="2">
        <text>ATP + protein L-histidine = ADP + protein N-phospho-L-histidine.</text>
        <dbReference type="EC" id="2.7.13.3"/>
    </reaction>
</comment>
<comment type="subcellular location">
    <subcellularLocation>
        <location evidence="2">Cytoplasm</location>
    </subcellularLocation>
</comment>
<comment type="PTM">
    <text evidence="2">Autophosphorylated.</text>
</comment>
<dbReference type="EC" id="2.7.13.3" evidence="2"/>
<dbReference type="EC" id="3.1.3.-" evidence="2"/>
<dbReference type="EMBL" id="AE005174">
    <property type="protein sequence ID" value="AAG59058.1"/>
    <property type="molecule type" value="Genomic_DNA"/>
</dbReference>
<dbReference type="EMBL" id="BA000007">
    <property type="protein sequence ID" value="BAB38214.1"/>
    <property type="molecule type" value="Genomic_DNA"/>
</dbReference>
<dbReference type="PIR" id="F86074">
    <property type="entry name" value="F86074"/>
</dbReference>
<dbReference type="PIR" id="G91227">
    <property type="entry name" value="G91227"/>
</dbReference>
<dbReference type="RefSeq" id="NP_312818.1">
    <property type="nucleotide sequence ID" value="NC_002695.1"/>
</dbReference>
<dbReference type="RefSeq" id="WP_000190577.1">
    <property type="nucleotide sequence ID" value="NZ_VOAI01000016.1"/>
</dbReference>
<dbReference type="SMR" id="P0AFB6"/>
<dbReference type="STRING" id="155864.Z5405"/>
<dbReference type="GeneID" id="915104"/>
<dbReference type="GeneID" id="93778067"/>
<dbReference type="KEGG" id="ece:Z5405"/>
<dbReference type="KEGG" id="ecs:ECs_4791"/>
<dbReference type="PATRIC" id="fig|386585.9.peg.5005"/>
<dbReference type="eggNOG" id="COG3852">
    <property type="taxonomic scope" value="Bacteria"/>
</dbReference>
<dbReference type="HOGENOM" id="CLU_000445_114_39_6"/>
<dbReference type="OMA" id="HGGRIDC"/>
<dbReference type="BRENDA" id="2.7.13.3">
    <property type="organism ID" value="2026"/>
</dbReference>
<dbReference type="Proteomes" id="UP000000558">
    <property type="component" value="Chromosome"/>
</dbReference>
<dbReference type="Proteomes" id="UP000002519">
    <property type="component" value="Chromosome"/>
</dbReference>
<dbReference type="GO" id="GO:0005737">
    <property type="term" value="C:cytoplasm"/>
    <property type="evidence" value="ECO:0007669"/>
    <property type="project" value="UniProtKB-SubCell"/>
</dbReference>
<dbReference type="GO" id="GO:0005524">
    <property type="term" value="F:ATP binding"/>
    <property type="evidence" value="ECO:0007669"/>
    <property type="project" value="UniProtKB-KW"/>
</dbReference>
<dbReference type="GO" id="GO:0016787">
    <property type="term" value="F:hydrolase activity"/>
    <property type="evidence" value="ECO:0007669"/>
    <property type="project" value="UniProtKB-KW"/>
</dbReference>
<dbReference type="GO" id="GO:0000155">
    <property type="term" value="F:phosphorelay sensor kinase activity"/>
    <property type="evidence" value="ECO:0007669"/>
    <property type="project" value="InterPro"/>
</dbReference>
<dbReference type="GO" id="GO:0009399">
    <property type="term" value="P:nitrogen fixation"/>
    <property type="evidence" value="ECO:0007669"/>
    <property type="project" value="UniProtKB-KW"/>
</dbReference>
<dbReference type="GO" id="GO:0006355">
    <property type="term" value="P:regulation of DNA-templated transcription"/>
    <property type="evidence" value="ECO:0007669"/>
    <property type="project" value="InterPro"/>
</dbReference>
<dbReference type="CDD" id="cd16918">
    <property type="entry name" value="HATPase_Glnl-NtrB-like"/>
    <property type="match status" value="1"/>
</dbReference>
<dbReference type="CDD" id="cd00082">
    <property type="entry name" value="HisKA"/>
    <property type="match status" value="1"/>
</dbReference>
<dbReference type="CDD" id="cd00130">
    <property type="entry name" value="PAS"/>
    <property type="match status" value="1"/>
</dbReference>
<dbReference type="FunFam" id="1.10.287.130:FF:000005">
    <property type="entry name" value="Nitrogen regulation histidine kinase"/>
    <property type="match status" value="1"/>
</dbReference>
<dbReference type="FunFam" id="3.30.565.10:FF:000008">
    <property type="entry name" value="Nitrogen regulation histidine kinase"/>
    <property type="match status" value="1"/>
</dbReference>
<dbReference type="FunFam" id="3.30.450.20:FF:000033">
    <property type="entry name" value="Nitrogen regulation protein NR(II)"/>
    <property type="match status" value="1"/>
</dbReference>
<dbReference type="Gene3D" id="1.10.287.130">
    <property type="match status" value="1"/>
</dbReference>
<dbReference type="Gene3D" id="3.30.565.10">
    <property type="entry name" value="Histidine kinase-like ATPase, C-terminal domain"/>
    <property type="match status" value="1"/>
</dbReference>
<dbReference type="Gene3D" id="3.30.450.20">
    <property type="entry name" value="PAS domain"/>
    <property type="match status" value="1"/>
</dbReference>
<dbReference type="InterPro" id="IPR036890">
    <property type="entry name" value="HATPase_C_sf"/>
</dbReference>
<dbReference type="InterPro" id="IPR005467">
    <property type="entry name" value="His_kinase_dom"/>
</dbReference>
<dbReference type="InterPro" id="IPR003661">
    <property type="entry name" value="HisK_dim/P_dom"/>
</dbReference>
<dbReference type="InterPro" id="IPR036097">
    <property type="entry name" value="HisK_dim/P_sf"/>
</dbReference>
<dbReference type="InterPro" id="IPR000014">
    <property type="entry name" value="PAS"/>
</dbReference>
<dbReference type="InterPro" id="IPR035965">
    <property type="entry name" value="PAS-like_dom_sf"/>
</dbReference>
<dbReference type="InterPro" id="IPR013767">
    <property type="entry name" value="PAS_fold"/>
</dbReference>
<dbReference type="InterPro" id="IPR004358">
    <property type="entry name" value="Sig_transdc_His_kin-like_C"/>
</dbReference>
<dbReference type="NCBIfam" id="NF008293">
    <property type="entry name" value="PRK11073.1"/>
    <property type="match status" value="1"/>
</dbReference>
<dbReference type="PANTHER" id="PTHR43065">
    <property type="entry name" value="SENSOR HISTIDINE KINASE"/>
    <property type="match status" value="1"/>
</dbReference>
<dbReference type="PANTHER" id="PTHR43065:SF16">
    <property type="entry name" value="SENSORY HISTIDINE KINASE_PHOSPHATASE NTRB"/>
    <property type="match status" value="1"/>
</dbReference>
<dbReference type="Pfam" id="PF02518">
    <property type="entry name" value="HATPase_c"/>
    <property type="match status" value="1"/>
</dbReference>
<dbReference type="Pfam" id="PF00512">
    <property type="entry name" value="HisKA"/>
    <property type="match status" value="1"/>
</dbReference>
<dbReference type="Pfam" id="PF00989">
    <property type="entry name" value="PAS"/>
    <property type="match status" value="1"/>
</dbReference>
<dbReference type="PRINTS" id="PR00344">
    <property type="entry name" value="BCTRLSENSOR"/>
</dbReference>
<dbReference type="SMART" id="SM00387">
    <property type="entry name" value="HATPase_c"/>
    <property type="match status" value="1"/>
</dbReference>
<dbReference type="SMART" id="SM00388">
    <property type="entry name" value="HisKA"/>
    <property type="match status" value="1"/>
</dbReference>
<dbReference type="SMART" id="SM00091">
    <property type="entry name" value="PAS"/>
    <property type="match status" value="1"/>
</dbReference>
<dbReference type="SUPFAM" id="SSF55874">
    <property type="entry name" value="ATPase domain of HSP90 chaperone/DNA topoisomerase II/histidine kinase"/>
    <property type="match status" value="1"/>
</dbReference>
<dbReference type="SUPFAM" id="SSF47384">
    <property type="entry name" value="Homodimeric domain of signal transducing histidine kinase"/>
    <property type="match status" value="1"/>
</dbReference>
<dbReference type="SUPFAM" id="SSF55785">
    <property type="entry name" value="PYP-like sensor domain (PAS domain)"/>
    <property type="match status" value="1"/>
</dbReference>
<dbReference type="PROSITE" id="PS50109">
    <property type="entry name" value="HIS_KIN"/>
    <property type="match status" value="1"/>
</dbReference>
<dbReference type="PROSITE" id="PS50112">
    <property type="entry name" value="PAS"/>
    <property type="match status" value="1"/>
</dbReference>
<proteinExistence type="inferred from homology"/>
<evidence type="ECO:0000250" key="1"/>
<evidence type="ECO:0000250" key="2">
    <source>
        <dbReference type="UniProtKB" id="P0AFB5"/>
    </source>
</evidence>
<evidence type="ECO:0000255" key="3">
    <source>
        <dbReference type="PROSITE-ProRule" id="PRU00107"/>
    </source>
</evidence>
<evidence type="ECO:0000255" key="4">
    <source>
        <dbReference type="PROSITE-ProRule" id="PRU00140"/>
    </source>
</evidence>
<gene>
    <name type="primary">glnL</name>
    <name type="ordered locus">Z5405</name>
    <name type="ordered locus">ECs4791</name>
</gene>
<feature type="chain" id="PRO_0000074821" description="Sensory histidine kinase/phosphatase NtrB">
    <location>
        <begin position="1"/>
        <end position="349"/>
    </location>
</feature>
<feature type="domain" description="PAS" evidence="4">
    <location>
        <begin position="5"/>
        <end position="78"/>
    </location>
</feature>
<feature type="domain" description="Histidine kinase" evidence="3">
    <location>
        <begin position="136"/>
        <end position="349"/>
    </location>
</feature>
<feature type="binding site" evidence="1">
    <location>
        <position position="329"/>
    </location>
    <ligand>
        <name>ATP</name>
        <dbReference type="ChEBI" id="CHEBI:30616"/>
    </ligand>
</feature>
<feature type="modified residue" description="Phosphohistidine; by autocatalysis" evidence="3">
    <location>
        <position position="139"/>
    </location>
</feature>
<protein>
    <recommendedName>
        <fullName evidence="2">Sensory histidine kinase/phosphatase NtrB</fullName>
        <ecNumber evidence="2">2.7.13.3</ecNumber>
        <ecNumber evidence="2">3.1.3.-</ecNumber>
    </recommendedName>
    <alternativeName>
        <fullName evidence="2">Nitrogen regulation protein NR(II)</fullName>
    </alternativeName>
    <alternativeName>
        <fullName evidence="2">Nitrogen regulator II</fullName>
        <shortName evidence="2">NRII</shortName>
    </alternativeName>
</protein>
<reference key="1">
    <citation type="journal article" date="2001" name="Nature">
        <title>Genome sequence of enterohaemorrhagic Escherichia coli O157:H7.</title>
        <authorList>
            <person name="Perna N.T."/>
            <person name="Plunkett G. III"/>
            <person name="Burland V."/>
            <person name="Mau B."/>
            <person name="Glasner J.D."/>
            <person name="Rose D.J."/>
            <person name="Mayhew G.F."/>
            <person name="Evans P.S."/>
            <person name="Gregor J."/>
            <person name="Kirkpatrick H.A."/>
            <person name="Posfai G."/>
            <person name="Hackett J."/>
            <person name="Klink S."/>
            <person name="Boutin A."/>
            <person name="Shao Y."/>
            <person name="Miller L."/>
            <person name="Grotbeck E.J."/>
            <person name="Davis N.W."/>
            <person name="Lim A."/>
            <person name="Dimalanta E.T."/>
            <person name="Potamousis K."/>
            <person name="Apodaca J."/>
            <person name="Anantharaman T.S."/>
            <person name="Lin J."/>
            <person name="Yen G."/>
            <person name="Schwartz D.C."/>
            <person name="Welch R.A."/>
            <person name="Blattner F.R."/>
        </authorList>
    </citation>
    <scope>NUCLEOTIDE SEQUENCE [LARGE SCALE GENOMIC DNA]</scope>
    <source>
        <strain>O157:H7 / EDL933 / ATCC 700927 / EHEC</strain>
    </source>
</reference>
<reference key="2">
    <citation type="journal article" date="2001" name="DNA Res.">
        <title>Complete genome sequence of enterohemorrhagic Escherichia coli O157:H7 and genomic comparison with a laboratory strain K-12.</title>
        <authorList>
            <person name="Hayashi T."/>
            <person name="Makino K."/>
            <person name="Ohnishi M."/>
            <person name="Kurokawa K."/>
            <person name="Ishii K."/>
            <person name="Yokoyama K."/>
            <person name="Han C.-G."/>
            <person name="Ohtsubo E."/>
            <person name="Nakayama K."/>
            <person name="Murata T."/>
            <person name="Tanaka M."/>
            <person name="Tobe T."/>
            <person name="Iida T."/>
            <person name="Takami H."/>
            <person name="Honda T."/>
            <person name="Sasakawa C."/>
            <person name="Ogasawara N."/>
            <person name="Yasunaga T."/>
            <person name="Kuhara S."/>
            <person name="Shiba T."/>
            <person name="Hattori M."/>
            <person name="Shinagawa H."/>
        </authorList>
    </citation>
    <scope>NUCLEOTIDE SEQUENCE [LARGE SCALE GENOMIC DNA]</scope>
    <source>
        <strain>O157:H7 / Sakai / RIMD 0509952 / EHEC</strain>
    </source>
</reference>